<accession>B7GNK3</accession>
<accession>E8MNT6</accession>
<feature type="chain" id="PRO_1000166704" description="Large ribosomal subunit protein bL21">
    <location>
        <begin position="1"/>
        <end position="102"/>
    </location>
</feature>
<comment type="function">
    <text evidence="1">This protein binds to 23S rRNA in the presence of protein L20.</text>
</comment>
<comment type="subunit">
    <text evidence="1">Part of the 50S ribosomal subunit. Contacts protein L20.</text>
</comment>
<comment type="similarity">
    <text evidence="1">Belongs to the bacterial ribosomal protein bL21 family.</text>
</comment>
<dbReference type="EMBL" id="CP001095">
    <property type="protein sequence ID" value="ACJ53359.1"/>
    <property type="molecule type" value="Genomic_DNA"/>
</dbReference>
<dbReference type="EMBL" id="AP010889">
    <property type="protein sequence ID" value="BAJ69952.1"/>
    <property type="molecule type" value="Genomic_DNA"/>
</dbReference>
<dbReference type="RefSeq" id="WP_012578529.1">
    <property type="nucleotide sequence ID" value="NZ_JDTT01000025.1"/>
</dbReference>
<dbReference type="SMR" id="B7GNK3"/>
<dbReference type="KEGG" id="bln:Blon_2301"/>
<dbReference type="KEGG" id="blon:BLIJ_2375"/>
<dbReference type="PATRIC" id="fig|391904.8.peg.2376"/>
<dbReference type="HOGENOM" id="CLU_061463_3_0_11"/>
<dbReference type="Proteomes" id="UP000001360">
    <property type="component" value="Chromosome"/>
</dbReference>
<dbReference type="GO" id="GO:0005737">
    <property type="term" value="C:cytoplasm"/>
    <property type="evidence" value="ECO:0007669"/>
    <property type="project" value="UniProtKB-ARBA"/>
</dbReference>
<dbReference type="GO" id="GO:1990904">
    <property type="term" value="C:ribonucleoprotein complex"/>
    <property type="evidence" value="ECO:0007669"/>
    <property type="project" value="UniProtKB-KW"/>
</dbReference>
<dbReference type="GO" id="GO:0005840">
    <property type="term" value="C:ribosome"/>
    <property type="evidence" value="ECO:0007669"/>
    <property type="project" value="UniProtKB-KW"/>
</dbReference>
<dbReference type="GO" id="GO:0019843">
    <property type="term" value="F:rRNA binding"/>
    <property type="evidence" value="ECO:0007669"/>
    <property type="project" value="UniProtKB-UniRule"/>
</dbReference>
<dbReference type="GO" id="GO:0003735">
    <property type="term" value="F:structural constituent of ribosome"/>
    <property type="evidence" value="ECO:0007669"/>
    <property type="project" value="InterPro"/>
</dbReference>
<dbReference type="GO" id="GO:0006412">
    <property type="term" value="P:translation"/>
    <property type="evidence" value="ECO:0007669"/>
    <property type="project" value="UniProtKB-UniRule"/>
</dbReference>
<dbReference type="HAMAP" id="MF_01363">
    <property type="entry name" value="Ribosomal_bL21"/>
    <property type="match status" value="1"/>
</dbReference>
<dbReference type="InterPro" id="IPR028909">
    <property type="entry name" value="bL21-like"/>
</dbReference>
<dbReference type="InterPro" id="IPR036164">
    <property type="entry name" value="bL21-like_sf"/>
</dbReference>
<dbReference type="InterPro" id="IPR001787">
    <property type="entry name" value="Ribosomal_bL21"/>
</dbReference>
<dbReference type="InterPro" id="IPR018258">
    <property type="entry name" value="Ribosomal_bL21_CS"/>
</dbReference>
<dbReference type="NCBIfam" id="TIGR00061">
    <property type="entry name" value="L21"/>
    <property type="match status" value="1"/>
</dbReference>
<dbReference type="PANTHER" id="PTHR21349">
    <property type="entry name" value="50S RIBOSOMAL PROTEIN L21"/>
    <property type="match status" value="1"/>
</dbReference>
<dbReference type="PANTHER" id="PTHR21349:SF0">
    <property type="entry name" value="LARGE RIBOSOMAL SUBUNIT PROTEIN BL21M"/>
    <property type="match status" value="1"/>
</dbReference>
<dbReference type="Pfam" id="PF00829">
    <property type="entry name" value="Ribosomal_L21p"/>
    <property type="match status" value="1"/>
</dbReference>
<dbReference type="SUPFAM" id="SSF141091">
    <property type="entry name" value="L21p-like"/>
    <property type="match status" value="1"/>
</dbReference>
<dbReference type="PROSITE" id="PS01169">
    <property type="entry name" value="RIBOSOMAL_L21"/>
    <property type="match status" value="1"/>
</dbReference>
<evidence type="ECO:0000255" key="1">
    <source>
        <dbReference type="HAMAP-Rule" id="MF_01363"/>
    </source>
</evidence>
<evidence type="ECO:0000305" key="2"/>
<organism>
    <name type="scientific">Bifidobacterium longum subsp. infantis (strain ATCC 15697 / DSM 20088 / JCM 1222 / NCTC 11817 / S12)</name>
    <dbReference type="NCBI Taxonomy" id="391904"/>
    <lineage>
        <taxon>Bacteria</taxon>
        <taxon>Bacillati</taxon>
        <taxon>Actinomycetota</taxon>
        <taxon>Actinomycetes</taxon>
        <taxon>Bifidobacteriales</taxon>
        <taxon>Bifidobacteriaceae</taxon>
        <taxon>Bifidobacterium</taxon>
    </lineage>
</organism>
<proteinExistence type="inferred from homology"/>
<gene>
    <name evidence="1" type="primary">rplU</name>
    <name type="ordered locus">Blon_2301</name>
    <name type="ordered locus">BLIJ_2375</name>
</gene>
<reference key="1">
    <citation type="journal article" date="2008" name="Proc. Natl. Acad. Sci. U.S.A.">
        <title>The genome sequence of Bifidobacterium longum subsp. infantis reveals adaptations for milk utilization within the infant microbiome.</title>
        <authorList>
            <person name="Sela D.A."/>
            <person name="Chapman J."/>
            <person name="Adeuya A."/>
            <person name="Kim J.H."/>
            <person name="Chen F."/>
            <person name="Whitehead T.R."/>
            <person name="Lapidus A."/>
            <person name="Rokhsar D.S."/>
            <person name="Lebrilla C.B."/>
            <person name="German J.B."/>
            <person name="Price N.P."/>
            <person name="Richardson P.M."/>
            <person name="Mills D.A."/>
        </authorList>
    </citation>
    <scope>NUCLEOTIDE SEQUENCE [LARGE SCALE GENOMIC DNA]</scope>
    <source>
        <strain>ATCC 15697 / DSM 20088 / JCM 1222 / NCTC 11817 / S12</strain>
    </source>
</reference>
<reference key="2">
    <citation type="journal article" date="2011" name="Nature">
        <title>Bifidobacteria can protect from enteropathogenic infection through production of acetate.</title>
        <authorList>
            <person name="Fukuda S."/>
            <person name="Toh H."/>
            <person name="Hase K."/>
            <person name="Oshima K."/>
            <person name="Nakanishi Y."/>
            <person name="Yoshimura K."/>
            <person name="Tobe T."/>
            <person name="Clarke J.M."/>
            <person name="Topping D.L."/>
            <person name="Suzuki T."/>
            <person name="Taylor T.D."/>
            <person name="Itoh K."/>
            <person name="Kikuchi J."/>
            <person name="Morita H."/>
            <person name="Hattori M."/>
            <person name="Ohno H."/>
        </authorList>
    </citation>
    <scope>NUCLEOTIDE SEQUENCE [LARGE SCALE GENOMIC DNA]</scope>
    <source>
        <strain>ATCC 15697 / DSM 20088 / JCM 1222 / NCTC 11817 / S12</strain>
    </source>
</reference>
<name>RL21_BIFLS</name>
<keyword id="KW-0687">Ribonucleoprotein</keyword>
<keyword id="KW-0689">Ribosomal protein</keyword>
<keyword id="KW-0694">RNA-binding</keyword>
<keyword id="KW-0699">rRNA-binding</keyword>
<protein>
    <recommendedName>
        <fullName evidence="1">Large ribosomal subunit protein bL21</fullName>
    </recommendedName>
    <alternativeName>
        <fullName evidence="2">50S ribosomal protein L21</fullName>
    </alternativeName>
</protein>
<sequence length="102" mass="10978">MYAIVKAGGHQEKVEVGDVILVNRLDAKKGDTVEFPVSLVVDGDKVTLAAADLAKVSVKAEVVNDEAKGPKIDIQKYKNKTGVARRKGHRQKLTIVKITAIA</sequence>